<feature type="chain" id="PRO_0000144774" description="Claudin-16">
    <location>
        <begin position="1"/>
        <end position="235"/>
    </location>
</feature>
<feature type="topological domain" description="Cytoplasmic" evidence="16">
    <location>
        <begin position="1"/>
        <end position="3"/>
    </location>
</feature>
<feature type="transmembrane region" description="Helical" evidence="3">
    <location>
        <begin position="4"/>
        <end position="24"/>
    </location>
</feature>
<feature type="topological domain" description="Extracellular" evidence="16">
    <location>
        <begin position="25"/>
        <end position="79"/>
    </location>
</feature>
<feature type="transmembrane region" description="Helical" evidence="3">
    <location>
        <begin position="80"/>
        <end position="100"/>
    </location>
</feature>
<feature type="topological domain" description="Cytoplasmic" evidence="16">
    <location>
        <begin position="101"/>
        <end position="115"/>
    </location>
</feature>
<feature type="transmembrane region" description="Helical" evidence="3">
    <location>
        <begin position="116"/>
        <end position="136"/>
    </location>
</feature>
<feature type="topological domain" description="Extracellular" evidence="16">
    <location>
        <begin position="137"/>
        <end position="169"/>
    </location>
</feature>
<feature type="transmembrane region" description="Helical" evidence="3">
    <location>
        <begin position="170"/>
        <end position="190"/>
    </location>
</feature>
<feature type="topological domain" description="Cytoplasmic" evidence="16">
    <location>
        <begin position="191"/>
        <end position="235"/>
    </location>
</feature>
<feature type="short sequence motif" description="Interaction with TJP1" evidence="1 7">
    <location>
        <begin position="233"/>
        <end position="235"/>
    </location>
</feature>
<feature type="sequence variant" id="VAR_089373" description="In HOMG3; retained in the endoplasmic reticulum and targeted for proteasomal degradation." evidence="9">
    <location>
        <begin position="47"/>
        <end position="235"/>
    </location>
</feature>
<feature type="sequence variant" id="VAR_089374" description="In HOMG3; localizes at tight junctions; dbSNP:rs765256758." evidence="9">
    <original>A</original>
    <variation>V</variation>
    <location>
        <position position="69"/>
    </location>
</feature>
<feature type="sequence variant" id="VAR_017228" description="In HOMG3; localizes at tight junctions; fails to increase paracellular magnesium transport." evidence="5 6 9">
    <original>H</original>
    <variation>D</variation>
    <location>
        <position position="71"/>
    </location>
</feature>
<feature type="sequence variant" id="VAR_017229" description="In HOMG3; localizes at tight junctions when coexpressed with CLDN19; displays almost normal interaction with CLDN19 yet it prevents functional synergistic effects on ion selectivity; impairs paracellular magnesium- and sodium-selective transport; dbSNP:rs104893731." evidence="5 6 8 9 10">
    <original>L</original>
    <variation>P</variation>
    <location>
        <position position="75"/>
    </location>
</feature>
<feature type="sequence variant" id="VAR_089375" description="In HOMG3; retained intracellularly with predominant localization in the Golgi apparatus and further targeted to lysosomes." evidence="9">
    <location>
        <begin position="79"/>
        <end position="235"/>
    </location>
</feature>
<feature type="sequence variant" id="VAR_017230" description="In HOMG3; retained in the endoplasmic reticulum and targeted for proteasomal degradation; loss of paracellular sodium-selective transport; dbSNP:rs968906940." evidence="6 8 9">
    <original>R</original>
    <variation>L</variation>
    <location>
        <position position="79"/>
    </location>
</feature>
<feature type="sequence variant" id="VAR_017231" description="In HOMG3; localizes at tight junctions when coexpressed with CLDN19; displays almost normal interaction with CLDN19 yet it prevents functional synergistic effects on ion selectivity; impairs paracellular sodium-selective transport; may be retained intracellularly; dbSNP:rs104893729." evidence="5 6 8 9 10">
    <original>L</original>
    <variation>F</variation>
    <location>
        <position position="81"/>
    </location>
</feature>
<feature type="sequence variant" id="VAR_017232" description="In HOMG3." evidence="5">
    <original>L</original>
    <variation>P</variation>
    <location>
        <position position="81"/>
    </location>
</feature>
<feature type="sequence variant" id="VAR_017233" description="In HOMG3; retained intracellularly with predominant localization in the Golgi apparatus and further targeted to lysosomes; dbSNP:rs104893730." evidence="5 6 9">
    <original>L</original>
    <variation>W</variation>
    <location>
        <position position="81"/>
    </location>
</feature>
<feature type="sequence variant" id="VAR_089376" description="In HOMG3; retained in the endoplasmic reticulum and targeted for proteasomal degradation." evidence="9">
    <original>G</original>
    <variation>V</variation>
    <location>
        <position position="92"/>
    </location>
</feature>
<feature type="sequence variant" id="VAR_008174" description="In HOMG3; retained in the endoplasmic reticulum and targeted for proteasomal degradation; loss of paracellular sodium-selective transport; dbSNP:rs104893725." evidence="4 8 9">
    <original>L</original>
    <variation>P</variation>
    <location>
        <position position="97"/>
    </location>
</feature>
<feature type="sequence variant" id="VAR_008175" description="In HOMG3; localizes at tight junctions when coexpressed with CLDN19; displays almost normal interaction with CLDN19 yet it prevents functional synergistic effects on ion selectivity; impairs paracellular magnesium- and sodium-selective transport; may be retained intracellularly and targeted to lysosomes; dbSNP:rs104893722." evidence="4 8 9 10">
    <original>G</original>
    <variation>R</variation>
    <location>
        <position position="121"/>
    </location>
</feature>
<feature type="sequence variant" id="VAR_017234" description="In HOMG3; localizes at tight junctions; fails to increase paracellular magnesium transport." evidence="6 7 9">
    <original>G</original>
    <variation>A</variation>
    <location>
        <position position="128"/>
    </location>
</feature>
<feature type="sequence variant" id="VAR_008176" description="In HOMG3; no detectable protein expression; loss of paracellular sodium-selective transport; dbSNP:rs104893723." evidence="4 5 8">
    <original>G</original>
    <variation>D</variation>
    <location>
        <position position="128"/>
    </location>
</feature>
<feature type="sequence variant" id="VAR_017235" description="In HOMG3; localizes at tight junctions when coexpressed with CLDN19; displays almost normal interaction with CLDN19 yet it prevents functional synergistic effects on ion selectivity; dbSNP:rs1270704258." evidence="6 8 9 10">
    <original>A</original>
    <variation>T</variation>
    <location>
        <position position="139"/>
    </location>
</feature>
<feature type="sequence variant" id="VAR_017236" description="In HOMG3; may result in loss of protein expression, loss of paracellular cation-selective transport; when localized at tight junctions, it fails to increase paracellular magnesium transport." evidence="6 8 9">
    <original>R</original>
    <variation>T</variation>
    <location>
        <position position="146"/>
    </location>
</feature>
<feature type="sequence variant" id="VAR_008177" description="In HOMG3; localizes at tight junctions when coexpressed with CLDN19; displays almost normal interaction with CLDN19 yet it prevents functional synergistic effects on ion selectivity; dbSNP:rs104893726." evidence="4 8 9 10">
    <original>F</original>
    <variation>C</variation>
    <location>
        <position position="162"/>
    </location>
</feature>
<feature type="sequence variant" id="VAR_008178" description="In HOMG3; retained in the endoplasmic reticulum and targeted for proteasomal degradation; dbSNP:rs104893727." evidence="4 8 9">
    <original>G</original>
    <variation>D</variation>
    <location>
        <position position="163"/>
    </location>
</feature>
<feature type="sequence variant" id="VAR_008179" description="In HOMG3; retained in the endoplasmic reticulum and targeted for proteasomal degradation; dbSNP:rs104893728." evidence="4 9">
    <original>S</original>
    <variation>F</variation>
    <location>
        <position position="165"/>
    </location>
</feature>
<feature type="sequence variant" id="VAR_017237" description="In HOMG3; retained in the endoplasmic reticulum and targeted for proteasomal degradation." evidence="6 8 9">
    <original>S</original>
    <variation>P</variation>
    <location>
        <position position="165"/>
    </location>
</feature>
<feature type="sequence variant" id="VAR_008172" description="In HOMG3; partially retained in the endoplasmic reticulum; loss of paracellular sodium-selective transport; dbSNP:rs104893721." evidence="4 5 6 8 9">
    <original>G</original>
    <variation>R</variation>
    <location>
        <position position="169"/>
    </location>
</feature>
<feature type="sequence variant" id="VAR_089377" description="In HOMG3; impairs interaction with TJP1 and anchoring to tight junctions; transits via the plasma membrane and is delivered to lysosomes upon endocytosis; fails to increase paracellular magnesium transport; dbSNP:rs121908542." evidence="7 9">
    <original>T</original>
    <variation>R</variation>
    <location>
        <position position="233"/>
    </location>
</feature>
<feature type="mutagenesis site" description="Low protein expression mostly retained in the endoplasmic reticulum; loss of paracellular sodium-selective transport." evidence="8">
    <original>D</original>
    <variation>S</variation>
    <location>
        <position position="27"/>
    </location>
</feature>
<feature type="mutagenesis site" description="Localizes at tight junctions; partial loss of paracellular sodium-selective transport." evidence="8">
    <original>D</original>
    <variation>S</variation>
    <location>
        <position position="34"/>
    </location>
</feature>
<feature type="mutagenesis site" description="Localizes at tight junctions; partial loss of paracellular sodium-selective transport." evidence="8">
    <original>D</original>
    <variation>S</variation>
    <location>
        <position position="35"/>
    </location>
</feature>
<feature type="mutagenesis site" description="No significant effect on protein subcellular localization or paracellular sodium-selective transport." evidence="8">
    <original>E</original>
    <variation>T</variation>
    <location>
        <position position="38"/>
    </location>
</feature>
<feature type="mutagenesis site" description="No significant effect on protein subcellular localization or paracellular sodium-selective transport." evidence="8">
    <original>K</original>
    <variation>S</variation>
    <location>
        <position position="42"/>
    </location>
</feature>
<feature type="mutagenesis site" description="No significant effect on protein subcellular localization or paracellular sodium-selective transport." evidence="8">
    <original>R</original>
    <variation>T</variation>
    <location>
        <position position="44"/>
    </location>
</feature>
<feature type="mutagenesis site" description="Localizes at tight junctions; partial loss of paracellular sodium-selective transport." evidence="8">
    <original>E</original>
    <variation>T</variation>
    <location>
        <position position="49"/>
    </location>
</feature>
<feature type="mutagenesis site" description="Localizes at tight junctions; partial loss of paracellular sodium-selective transport." evidence="8">
    <original>D</original>
    <variation>S</variation>
    <location>
        <position position="56"/>
    </location>
</feature>
<feature type="mutagenesis site" description="No significant effect on protein subcellular localization or paracellular sodium-selective transport." evidence="8">
    <original>R</original>
    <variation>T</variation>
    <location>
        <position position="59"/>
    </location>
</feature>
<feature type="mutagenesis site" description="No significant effect on protein subcellular localization or paracellular sodium-selective transport." evidence="8">
    <original>D</original>
    <variation>S</variation>
    <location>
        <position position="62"/>
    </location>
</feature>
<feature type="mutagenesis site" description="No significant effect on protein subcellular localization or paracellular sodium-selective transport." evidence="8">
    <original>E</original>
    <variation>T</variation>
    <location>
        <position position="63"/>
    </location>
</feature>
<feature type="mutagenesis site" description="No significant effect on protein subcellular localization or paracellular sodium-selective transport." evidence="8">
    <original>D</original>
    <variation>S</variation>
    <location>
        <position position="65"/>
    </location>
</feature>
<feature type="mutagenesis site" description="Localizes at tight junctions; partial loss of paracellular sodium-selective transport." evidence="8">
    <original>E</original>
    <variation>T</variation>
    <location>
        <position position="70"/>
    </location>
</feature>
<feature type="mutagenesis site" description="No significant effect on protein subcellular localization or paracellular sodium-selective transport." evidence="8">
    <original>K</original>
    <variation>S</variation>
    <location>
        <position position="74"/>
    </location>
</feature>
<feature type="mutagenesis site" description="Low protein expression mostly retained in the endoplasmic reticulum; loss of paracellular sodium-selective transport." evidence="8">
    <original>R</original>
    <variation>T</variation>
    <location>
        <position position="79"/>
    </location>
</feature>
<proteinExistence type="evidence at protein level"/>
<evidence type="ECO:0000250" key="1">
    <source>
        <dbReference type="UniProtKB" id="Q91Y55"/>
    </source>
</evidence>
<evidence type="ECO:0000250" key="2">
    <source>
        <dbReference type="UniProtKB" id="Q925N4"/>
    </source>
</evidence>
<evidence type="ECO:0000255" key="3"/>
<evidence type="ECO:0000269" key="4">
    <source>
    </source>
</evidence>
<evidence type="ECO:0000269" key="5">
    <source>
    </source>
</evidence>
<evidence type="ECO:0000269" key="6">
    <source>
    </source>
</evidence>
<evidence type="ECO:0000269" key="7">
    <source>
    </source>
</evidence>
<evidence type="ECO:0000269" key="8">
    <source>
    </source>
</evidence>
<evidence type="ECO:0000269" key="9">
    <source>
    </source>
</evidence>
<evidence type="ECO:0000269" key="10">
    <source>
    </source>
</evidence>
<evidence type="ECO:0000269" key="11">
    <source>
    </source>
</evidence>
<evidence type="ECO:0000269" key="12">
    <source>
    </source>
</evidence>
<evidence type="ECO:0000269" key="13">
    <source>
    </source>
</evidence>
<evidence type="ECO:0000303" key="14">
    <source>
    </source>
</evidence>
<evidence type="ECO:0000303" key="15">
    <source>
    </source>
</evidence>
<evidence type="ECO:0000305" key="16"/>
<evidence type="ECO:0000305" key="17">
    <source>
    </source>
</evidence>
<evidence type="ECO:0000312" key="18">
    <source>
        <dbReference type="HGNC" id="HGNC:2037"/>
    </source>
</evidence>
<reference key="1">
    <citation type="journal article" date="1999" name="Science">
        <title>Paracellin-1, a renal tight junction protein required for paracellular Mg2+ resorption.</title>
        <authorList>
            <person name="Simon D.B."/>
            <person name="Lu Y."/>
            <person name="Choate K.A."/>
            <person name="Velazquez H."/>
            <person name="Al-Sabban E."/>
            <person name="Praga M."/>
            <person name="Casari G."/>
            <person name="Bettinelli A."/>
            <person name="Colussi G."/>
            <person name="Rodriguez-Soriano J."/>
            <person name="McCredie D."/>
            <person name="Milford D."/>
            <person name="Sanjad S."/>
            <person name="Lifton R.P."/>
        </authorList>
    </citation>
    <scope>NUCLEOTIDE SEQUENCE [MRNA]</scope>
    <scope>VARIANTS HOMG3 PRO-97; ARG-121; ASP-128; CYS-162; ASP-163; PHE-165 AND ARG-169</scope>
    <scope>FUNCTION</scope>
    <scope>SUBCELLULAR LOCATION</scope>
    <scope>TISSUE SPECIFICITY</scope>
</reference>
<reference key="2">
    <citation type="journal article" date="2004" name="Genome Res.">
        <title>The status, quality, and expansion of the NIH full-length cDNA project: the Mammalian Gene Collection (MGC).</title>
        <authorList>
            <consortium name="The MGC Project Team"/>
        </authorList>
    </citation>
    <scope>NUCLEOTIDE SEQUENCE [LARGE SCALE MRNA]</scope>
</reference>
<reference key="3">
    <citation type="journal article" date="2005" name="J. Cell Sci.">
        <title>Paracellin-1 and the modulation of ion selectivity of tight junctions.</title>
        <authorList>
            <person name="Hou J."/>
            <person name="Paul D.L."/>
            <person name="Goodenough D.A."/>
        </authorList>
    </citation>
    <scope>FUNCTION</scope>
    <scope>TRANSPORTER ACTIVITY</scope>
    <scope>SUBCELLULAR LOCATION</scope>
    <scope>DOMAIN</scope>
    <scope>MUTAGENESIS OF ASP-27; ASP-34; ASP-35; GLU-38; LYS-42; ARG-44; GLU-49; ASP-56; ARG-59; ASP-62; GLU-63; ASP-65; GLU-70; LYS-74 AND ARG-79</scope>
    <scope>CHARACTERIZATION OF VARIANTS HOMG3 PRO-75; LEU-79; PHE-81; PRO-97; ARG-121; ASP-128; THR-139; THR-146; CYS-162; ASP-163 AND PRO-165</scope>
    <scope>VARIANT HOMG3 ARG-169</scope>
</reference>
<reference key="4">
    <citation type="journal article" date="2006" name="J. Clin. Invest.">
        <title>Disease-associated mutations affect intracellular traffic and paracellular Mg2+ transport function of Claudin-16.</title>
        <authorList>
            <person name="Kausalya P.J."/>
            <person name="Amasheh S."/>
            <person name="Guenzel D."/>
            <person name="Wurps H."/>
            <person name="Mueller D."/>
            <person name="Fromm M."/>
            <person name="Hunziker W."/>
        </authorList>
    </citation>
    <scope>FUNCTION</scope>
    <scope>TRANSPORTER ACTIVITY</scope>
    <scope>SUBCELLULAR LOCATION</scope>
    <scope>CHARACTERIZATION OF VARIANTS HOMG3 47-TRP--VAL-235 DEL; VAL-69; ASP-71; PRO-75; 79-ARG--VAL-235 DEL; LEU-79; TRP-81; PHE-81; VAL-92; PRO-97; ARG-121; ALA-128; THR-139; THR-146; CYS-162; ASP-163; PHE-165; PRO-165; ARG-169 AND ARG-233</scope>
</reference>
<reference key="5">
    <citation type="journal article" date="2008" name="J. Clin. Invest.">
        <title>Claudin-16 and claudin-19 interact and form a cation-selective tight junction complex.</title>
        <authorList>
            <person name="Hou J."/>
            <person name="Renigunta A."/>
            <person name="Konrad M."/>
            <person name="Gomes A.S."/>
            <person name="Schneeberger E.E."/>
            <person name="Paul D.L."/>
            <person name="Waldegger S."/>
            <person name="Goodenough D.A."/>
        </authorList>
    </citation>
    <scope>FUNCTION</scope>
    <scope>TRANSPORTER ACTIVITY</scope>
    <scope>SUBUNIT</scope>
    <scope>INTERACTION WITH CLDN19</scope>
    <scope>SUBCELLULAR LOCATION</scope>
    <scope>CHARACTERIZATION OF VARIANTS HOMG3 PRO-75; PHE-81; ARG-121; THR-139 AND CYS-162</scope>
</reference>
<reference key="6">
    <citation type="journal article" date="2009" name="Proc. Natl. Acad. Sci. U.S.A.">
        <title>Claudin-16 and claudin-19 interaction is required for their assembly into tight junctions and for renal reabsorption of magnesium.</title>
        <authorList>
            <person name="Hou J."/>
            <person name="Renigunta A."/>
            <person name="Gomes A.S."/>
            <person name="Hou M."/>
            <person name="Paul D.L."/>
            <person name="Waldegger S."/>
            <person name="Goodenough D.A."/>
        </authorList>
    </citation>
    <scope>INTERACTION WITH CLDN19</scope>
</reference>
<reference key="7">
    <citation type="journal article" date="2017" name="Proc. Natl. Acad. Sci. U.S.A.">
        <title>Mosaic expression of claudins in thick ascending limbs of Henle results in spatial separation of paracellular Na+ and Mg2+ transport.</title>
        <authorList>
            <person name="Milatz S."/>
            <person name="Himmerkus N."/>
            <person name="Wulfmeyer V.C."/>
            <person name="Drewell H."/>
            <person name="Mutig K."/>
            <person name="Hou J."/>
            <person name="Breiderhoff T."/>
            <person name="Mueller D."/>
            <person name="Fromm M."/>
            <person name="Bleich M."/>
            <person name="Guenzel D."/>
        </authorList>
    </citation>
    <scope>FUNCTION</scope>
    <scope>SUBUNIT</scope>
    <scope>INTERACTION WITH CLDN19</scope>
    <scope>SUBCELLULAR LOCATION</scope>
</reference>
<reference key="8">
    <citation type="journal article" date="2022" name="Nat. Commun.">
        <title>Nanoscale segregation of channel and barrier claudins enables paracellular ion flux.</title>
        <authorList>
            <person name="Gonschior H."/>
            <person name="Schmied C."/>
            <person name="Van der Veen R.E."/>
            <person name="Eichhorst J."/>
            <person name="Himmerkus N."/>
            <person name="Piontek J."/>
            <person name="Guenzel D."/>
            <person name="Bleich M."/>
            <person name="Furuse M."/>
            <person name="Haucke V."/>
            <person name="Lehmann M."/>
        </authorList>
    </citation>
    <scope>SUBUNIT</scope>
</reference>
<reference key="9">
    <citation type="journal article" date="2000" name="Eur. J. Hum. Genet.">
        <title>Familial hypomagnesaemia with hypercalciuria and nephrocalcinosis maps to chromosome 3q27 and is associated with mutations in the PCLN-1 gene.</title>
        <authorList>
            <person name="Weber S."/>
            <person name="Hoffmann K."/>
            <person name="Jeck N."/>
            <person name="Saar K."/>
            <person name="Boeswald M."/>
            <person name="Kuwertz-Broeking E."/>
            <person name="Meij I.I."/>
            <person name="Knoers N.V."/>
            <person name="Cochat P."/>
            <person name="Sulakova T."/>
            <person name="Bonzel K.E."/>
            <person name="Soergel M."/>
            <person name="Manz F."/>
            <person name="Schaerer K."/>
            <person name="Seyberth H.W."/>
            <person name="Reis A."/>
            <person name="Konrad M."/>
        </authorList>
    </citation>
    <scope>INVOLVEMENT IN HOMG3</scope>
    <scope>VARIANTS HOMG3 ASP-71; PRO-75; PHE-81; PRO-81; TRP-81; ASP-128 AND ARG-169</scope>
</reference>
<reference key="10">
    <citation type="journal article" date="2001" name="J. Am. Soc. Nephrol.">
        <title>Novel paracellin-1 mutations in 25 families with familial hypomagnesemia with hypercalciuria and nephrocalcinosis.</title>
        <authorList>
            <person name="Weber S."/>
            <person name="Schneider L."/>
            <person name="Peters M."/>
            <person name="Misselwitz J."/>
            <person name="Roennefarth G."/>
            <person name="Boeswald M."/>
            <person name="Bonzel K.E."/>
            <person name="Seeman T."/>
            <person name="Sulakova T."/>
            <person name="Kuwertz-Broeking E."/>
            <person name="Gregoric A."/>
            <person name="Palcoux J.-B."/>
            <person name="Tasic V."/>
            <person name="Manz F."/>
            <person name="Schaerer K."/>
            <person name="Seyberth H.W."/>
            <person name="Konrad M."/>
        </authorList>
    </citation>
    <scope>INVOLVEMENT IN HOMG3</scope>
    <scope>VARIANTS HOMG3 ASP-71; PRO-75; LEU-79; PHE-81; TRP-81; ALA-128; THR-139; THR-146; PRO-165 AND ARG-169</scope>
    <scope>FUNCTION</scope>
</reference>
<reference key="11">
    <citation type="journal article" date="2003" name="Am. J. Hum. Genet.">
        <title>A novel claudin 16 mutation associated with childhood hypercalciuria abolishes binding to ZO-1 and results in lysosomal mistargeting.</title>
        <authorList>
            <person name="Mueller D."/>
            <person name="Kausalya P.J."/>
            <person name="Claverie-Martin F."/>
            <person name="Meij I.C."/>
            <person name="Eggert P."/>
            <person name="Garcia-Nieto V."/>
            <person name="Hunziker W."/>
        </authorList>
    </citation>
    <scope>INVOLVEMENT IN HOMG3</scope>
    <scope>CHARACTERIZATION OF VARIANTS HOMG3 ALA-128 AND ARG-233</scope>
    <scope>SUBCELLULAR LOCATION</scope>
    <scope>INTERACTION WITH TJP1</scope>
    <scope>MOTIF</scope>
    <scope>FUNCTION</scope>
</reference>
<keyword id="KW-0965">Cell junction</keyword>
<keyword id="KW-1003">Cell membrane</keyword>
<keyword id="KW-0225">Disease variant</keyword>
<keyword id="KW-0406">Ion transport</keyword>
<keyword id="KW-0460">Magnesium</keyword>
<keyword id="KW-0472">Membrane</keyword>
<keyword id="KW-0982">Primary hypomagnesemia</keyword>
<keyword id="KW-1267">Proteomics identification</keyword>
<keyword id="KW-1185">Reference proteome</keyword>
<keyword id="KW-0796">Tight junction</keyword>
<keyword id="KW-0812">Transmembrane</keyword>
<keyword id="KW-1133">Transmembrane helix</keyword>
<keyword id="KW-0813">Transport</keyword>
<sequence>MRDLLQYIACFFAFFSAGFLIVATWTDCWMVNADDSLEVSTKCRGLWWECVTNAFDGIRTCDEYDSILAEHPLKLVVTRALMITADILAGFGFLTLLLGLDCVKFLPDEPYIKVRICFVAGATLLIAGTPGIIGSVWYAVDVYVERSTLVLHNIFLGIQYKFGWSCWLGMAGSLGCFLAGAVLTCCLYLFKDVGPERNYPYSLRKAYSAAGVSMAKSYSAPRTETAKMYAVDTRV</sequence>
<name>CLD16_HUMAN</name>
<organism>
    <name type="scientific">Homo sapiens</name>
    <name type="common">Human</name>
    <dbReference type="NCBI Taxonomy" id="9606"/>
    <lineage>
        <taxon>Eukaryota</taxon>
        <taxon>Metazoa</taxon>
        <taxon>Chordata</taxon>
        <taxon>Craniata</taxon>
        <taxon>Vertebrata</taxon>
        <taxon>Euteleostomi</taxon>
        <taxon>Mammalia</taxon>
        <taxon>Eutheria</taxon>
        <taxon>Euarchontoglires</taxon>
        <taxon>Primates</taxon>
        <taxon>Haplorrhini</taxon>
        <taxon>Catarrhini</taxon>
        <taxon>Hominidae</taxon>
        <taxon>Homo</taxon>
    </lineage>
</organism>
<comment type="function">
    <text evidence="4 6 7 8 9 10 12">Forms paracellular channels: coassembles with CLDN19 into tight junction strands with cation-selective channels through the strands, conveying epithelial permeability in a process known as paracellular tight junction permeability (PubMed:16234325, PubMed:18188451, PubMed:28028216). Involved in the maintenance of ion gradients along the nephron. In the thick ascending limb (TAL) of Henle's loop, facilitates sodium paracellular permeability from the interstitial compartment to the lumen, contributing to the lumen-positive transepithelial potential that drives paracellular magnesium and calcium reabsorption (PubMed:10390358, PubMed:11518780, PubMed:14628289, PubMed:16528408, PubMed:28028216).</text>
</comment>
<comment type="catalytic activity">
    <reaction evidence="8 9 17">
        <text>Mg(2+)(in) = Mg(2+)(out)</text>
        <dbReference type="Rhea" id="RHEA:29827"/>
        <dbReference type="ChEBI" id="CHEBI:18420"/>
    </reaction>
</comment>
<comment type="catalytic activity">
    <reaction evidence="2">
        <text>Ca(2+)(in) = Ca(2+)(out)</text>
        <dbReference type="Rhea" id="RHEA:29671"/>
        <dbReference type="ChEBI" id="CHEBI:29108"/>
    </reaction>
</comment>
<comment type="catalytic activity">
    <reaction evidence="8 10">
        <text>Na(+)(in) = Na(+)(out)</text>
        <dbReference type="Rhea" id="RHEA:34963"/>
        <dbReference type="ChEBI" id="CHEBI:29101"/>
    </reaction>
</comment>
<comment type="catalytic activity">
    <reaction evidence="8">
        <text>K(+)(in) = K(+)(out)</text>
        <dbReference type="Rhea" id="RHEA:29463"/>
        <dbReference type="ChEBI" id="CHEBI:29103"/>
    </reaction>
</comment>
<comment type="catalytic activity">
    <reaction evidence="8">
        <text>Rb(+)(in) = Rb(+)(out)</text>
        <dbReference type="Rhea" id="RHEA:78547"/>
        <dbReference type="ChEBI" id="CHEBI:49847"/>
    </reaction>
</comment>
<comment type="catalytic activity">
    <reaction evidence="8">
        <text>Cs(+)(in) = Cs(+)(out)</text>
        <dbReference type="Rhea" id="RHEA:78555"/>
        <dbReference type="ChEBI" id="CHEBI:49547"/>
    </reaction>
</comment>
<comment type="catalytic activity">
    <reaction evidence="8">
        <text>Li(+)(in) = Li(+)(out)</text>
        <dbReference type="Rhea" id="RHEA:78551"/>
        <dbReference type="ChEBI" id="CHEBI:49713"/>
    </reaction>
</comment>
<comment type="subunit">
    <text evidence="1 7 10 11 12 13">Can form heteropolymeric tight junction strands with other claudins. Interacts with CLDN19 (PubMed:18188451, PubMed:19706394, PubMed:28028216, PubMed:36008380). Interacts (via PDZ-binding motif TRV) with TJP1 (via PDZ domain) (By similarity) (PubMed:14628289). Cannot form tight junction strands on its own (PubMed:18188451, PubMed:28028216, PubMed:36008380).</text>
</comment>
<comment type="interaction">
    <interactant intactId="EBI-7774981">
        <id>Q9Y5I7</id>
    </interactant>
    <interactant intactId="EBI-7774956">
        <id>Q9Z0S3</id>
        <label>Cldn14</label>
    </interactant>
    <organismsDiffer>true</organismsDiffer>
    <experiments>3</experiments>
</comment>
<comment type="subcellular location">
    <subcellularLocation>
        <location evidence="4 7 8 9 10 12">Cell junction</location>
        <location evidence="4 7 8 9 10 12">Tight junction</location>
    </subcellularLocation>
    <subcellularLocation>
        <location evidence="4 7 8 9 10 12">Cell membrane</location>
        <topology evidence="3">Multi-pass membrane protein</topology>
    </subcellularLocation>
    <text evidence="10">Cotrafficks with CLDN19 from ER to tight junctions.</text>
</comment>
<comment type="tissue specificity">
    <text evidence="4">Kidney-specific, including the thick ascending limb of Henle (TAL).</text>
</comment>
<comment type="domain">
    <text evidence="8">The first extracellular loop (25-79) contains negatively charged amino acids that affect cation selectivity.</text>
</comment>
<comment type="disease" evidence="4 5 6 7 8 9 10">
    <disease id="DI-00578">
        <name>Hypomagnesemia 3</name>
        <acronym>HOMG3</acronym>
        <description>A progressive renal disease characterized by primary renal magnesium wasting with hypomagnesemia, hypercalciuria and nephrocalcinosis. Recurrent urinary tract infections and kidney stones are often observed. In spite of hypercalciuria, patients do not show hypocalcemia.</description>
        <dbReference type="MIM" id="248250"/>
    </disease>
    <text>The disease is caused by variants affecting the gene represented in this entry.</text>
</comment>
<comment type="similarity">
    <text evidence="16">Belongs to the claudin family.</text>
</comment>
<protein>
    <recommendedName>
        <fullName evidence="15">Claudin-16</fullName>
    </recommendedName>
    <alternativeName>
        <fullName evidence="14">Paracellin-1</fullName>
        <shortName evidence="14">PCLN-1</shortName>
    </alternativeName>
</protein>
<accession>Q9Y5I7</accession>
<dbReference type="EMBL" id="AF152101">
    <property type="protein sequence ID" value="AAD43096.1"/>
    <property type="molecule type" value="mRNA"/>
</dbReference>
<dbReference type="EMBL" id="BC069662">
    <property type="protein sequence ID" value="AAH69662.1"/>
    <property type="molecule type" value="mRNA"/>
</dbReference>
<dbReference type="EMBL" id="BC069682">
    <property type="protein sequence ID" value="AAH69682.1"/>
    <property type="molecule type" value="mRNA"/>
</dbReference>
<dbReference type="EMBL" id="BC069759">
    <property type="protein sequence ID" value="AAH69759.1"/>
    <property type="molecule type" value="mRNA"/>
</dbReference>
<dbReference type="EMBL" id="BC069777">
    <property type="protein sequence ID" value="AAH69777.1"/>
    <property type="molecule type" value="mRNA"/>
</dbReference>
<dbReference type="CCDS" id="CCDS3296.2"/>
<dbReference type="RefSeq" id="NP_001365421.1">
    <property type="nucleotide sequence ID" value="NM_001378492.1"/>
</dbReference>
<dbReference type="RefSeq" id="NP_001365422.1">
    <property type="nucleotide sequence ID" value="NM_001378493.1"/>
</dbReference>
<dbReference type="RefSeq" id="NP_006571.2">
    <property type="nucleotide sequence ID" value="NM_006580.4"/>
</dbReference>
<dbReference type="RefSeq" id="XP_047303289.1">
    <property type="nucleotide sequence ID" value="XM_047447333.1"/>
</dbReference>
<dbReference type="RefSeq" id="XP_054200965.1">
    <property type="nucleotide sequence ID" value="XM_054344990.1"/>
</dbReference>
<dbReference type="SMR" id="Q9Y5I7"/>
<dbReference type="BioGRID" id="115925">
    <property type="interactions" value="3"/>
</dbReference>
<dbReference type="DIP" id="DIP-48951N"/>
<dbReference type="FunCoup" id="Q9Y5I7">
    <property type="interactions" value="365"/>
</dbReference>
<dbReference type="IntAct" id="Q9Y5I7">
    <property type="interactions" value="3"/>
</dbReference>
<dbReference type="MINT" id="Q9Y5I7"/>
<dbReference type="STRING" id="9606.ENSP00000264734"/>
<dbReference type="DrugBank" id="DB14513">
    <property type="generic name" value="Magnesium"/>
</dbReference>
<dbReference type="TCDB" id="1.H.1.1.1">
    <property type="family name" value="the claudin tight junction (claudin1) family"/>
</dbReference>
<dbReference type="iPTMnet" id="Q9Y5I7"/>
<dbReference type="PhosphoSitePlus" id="Q9Y5I7"/>
<dbReference type="BioMuta" id="CLDN16"/>
<dbReference type="DMDM" id="6685318"/>
<dbReference type="MassIVE" id="Q9Y5I7"/>
<dbReference type="PaxDb" id="9606-ENSP00000264734"/>
<dbReference type="PeptideAtlas" id="Q9Y5I7"/>
<dbReference type="ProteomicsDB" id="86416"/>
<dbReference type="Antibodypedia" id="19357">
    <property type="antibodies" value="194 antibodies from 25 providers"/>
</dbReference>
<dbReference type="DNASU" id="10686"/>
<dbReference type="Ensembl" id="ENST00000264734.3">
    <property type="protein sequence ID" value="ENSP00000264734.3"/>
    <property type="gene ID" value="ENSG00000113946.4"/>
</dbReference>
<dbReference type="GeneID" id="10686"/>
<dbReference type="KEGG" id="hsa:10686"/>
<dbReference type="MANE-Select" id="ENST00000264734.3">
    <property type="protein sequence ID" value="ENSP00000264734.3"/>
    <property type="RefSeq nucleotide sequence ID" value="NM_006580.4"/>
    <property type="RefSeq protein sequence ID" value="NP_006571.2"/>
</dbReference>
<dbReference type="UCSC" id="uc003fsi.3">
    <property type="organism name" value="human"/>
</dbReference>
<dbReference type="AGR" id="HGNC:2037"/>
<dbReference type="CTD" id="10686"/>
<dbReference type="DisGeNET" id="10686"/>
<dbReference type="GeneCards" id="CLDN16"/>
<dbReference type="HGNC" id="HGNC:2037">
    <property type="gene designation" value="CLDN16"/>
</dbReference>
<dbReference type="HPA" id="ENSG00000113946">
    <property type="expression patterns" value="Tissue enriched (kidney)"/>
</dbReference>
<dbReference type="MalaCards" id="CLDN16"/>
<dbReference type="MIM" id="248250">
    <property type="type" value="phenotype"/>
</dbReference>
<dbReference type="MIM" id="603959">
    <property type="type" value="gene"/>
</dbReference>
<dbReference type="neXtProt" id="NX_Q9Y5I7"/>
<dbReference type="OpenTargets" id="ENSG00000113946"/>
<dbReference type="Orphanet" id="31043">
    <property type="disease" value="Primary hypomagnesemia with hypercalciuria and nephrocalcinosis without severe ocular involvement"/>
</dbReference>
<dbReference type="PharmGKB" id="PA26563"/>
<dbReference type="VEuPathDB" id="HostDB:ENSG00000113946"/>
<dbReference type="eggNOG" id="ENOG502QRY9">
    <property type="taxonomic scope" value="Eukaryota"/>
</dbReference>
<dbReference type="GeneTree" id="ENSGT00730000111162"/>
<dbReference type="HOGENOM" id="CLU_079378_0_0_1"/>
<dbReference type="InParanoid" id="Q9Y5I7"/>
<dbReference type="OMA" id="GLHCVKF"/>
<dbReference type="OrthoDB" id="8498983at2759"/>
<dbReference type="PAN-GO" id="Q9Y5I7">
    <property type="GO annotations" value="4 GO annotations based on evolutionary models"/>
</dbReference>
<dbReference type="PhylomeDB" id="Q9Y5I7"/>
<dbReference type="TreeFam" id="TF331936"/>
<dbReference type="PathwayCommons" id="Q9Y5I7"/>
<dbReference type="Reactome" id="R-HSA-420029">
    <property type="pathway name" value="Tight junction interactions"/>
</dbReference>
<dbReference type="SignaLink" id="Q9Y5I7"/>
<dbReference type="BioGRID-ORCS" id="10686">
    <property type="hits" value="5 hits in 1135 CRISPR screens"/>
</dbReference>
<dbReference type="ChiTaRS" id="CLDN16">
    <property type="organism name" value="human"/>
</dbReference>
<dbReference type="GeneWiki" id="CLDN16"/>
<dbReference type="GenomeRNAi" id="10686"/>
<dbReference type="Pharos" id="Q9Y5I7">
    <property type="development level" value="Tbio"/>
</dbReference>
<dbReference type="PRO" id="PR:Q9Y5I7"/>
<dbReference type="Proteomes" id="UP000005640">
    <property type="component" value="Chromosome 3"/>
</dbReference>
<dbReference type="RNAct" id="Q9Y5I7">
    <property type="molecule type" value="protein"/>
</dbReference>
<dbReference type="Bgee" id="ENSG00000113946">
    <property type="expression patterns" value="Expressed in male germ line stem cell (sensu Vertebrata) in testis and 81 other cell types or tissues"/>
</dbReference>
<dbReference type="ExpressionAtlas" id="Q9Y5I7">
    <property type="expression patterns" value="baseline and differential"/>
</dbReference>
<dbReference type="GO" id="GO:0005923">
    <property type="term" value="C:bicellular tight junction"/>
    <property type="evidence" value="ECO:0000250"/>
    <property type="project" value="UniProtKB"/>
</dbReference>
<dbReference type="GO" id="GO:0005886">
    <property type="term" value="C:plasma membrane"/>
    <property type="evidence" value="ECO:0000318"/>
    <property type="project" value="GO_Central"/>
</dbReference>
<dbReference type="GO" id="GO:0070160">
    <property type="term" value="C:tight junction"/>
    <property type="evidence" value="ECO:0000314"/>
    <property type="project" value="UniProtKB"/>
</dbReference>
<dbReference type="GO" id="GO:0042802">
    <property type="term" value="F:identical protein binding"/>
    <property type="evidence" value="ECO:0000314"/>
    <property type="project" value="UniProtKB"/>
</dbReference>
<dbReference type="GO" id="GO:0015095">
    <property type="term" value="F:magnesium ion transmembrane transporter activity"/>
    <property type="evidence" value="ECO:0000304"/>
    <property type="project" value="ProtInc"/>
</dbReference>
<dbReference type="GO" id="GO:0160187">
    <property type="term" value="F:paracellular tight junction channel activity"/>
    <property type="evidence" value="ECO:0000314"/>
    <property type="project" value="UniProtKB"/>
</dbReference>
<dbReference type="GO" id="GO:0030165">
    <property type="term" value="F:PDZ domain binding"/>
    <property type="evidence" value="ECO:0000314"/>
    <property type="project" value="UniProtKB"/>
</dbReference>
<dbReference type="GO" id="GO:0005198">
    <property type="term" value="F:structural molecule activity"/>
    <property type="evidence" value="ECO:0007669"/>
    <property type="project" value="InterPro"/>
</dbReference>
<dbReference type="GO" id="GO:0070830">
    <property type="term" value="P:bicellular tight junction assembly"/>
    <property type="evidence" value="ECO:0000318"/>
    <property type="project" value="GO_Central"/>
</dbReference>
<dbReference type="GO" id="GO:0016338">
    <property type="term" value="P:calcium-independent cell-cell adhesion via plasma membrane cell-adhesion molecules"/>
    <property type="evidence" value="ECO:0000250"/>
    <property type="project" value="UniProtKB"/>
</dbReference>
<dbReference type="GO" id="GO:0007155">
    <property type="term" value="P:cell adhesion"/>
    <property type="evidence" value="ECO:0000318"/>
    <property type="project" value="GO_Central"/>
</dbReference>
<dbReference type="GO" id="GO:0010496">
    <property type="term" value="P:intercellular transport"/>
    <property type="evidence" value="ECO:0000304"/>
    <property type="project" value="ProtInc"/>
</dbReference>
<dbReference type="GO" id="GO:0030003">
    <property type="term" value="P:intracellular monoatomic cation homeostasis"/>
    <property type="evidence" value="ECO:0000304"/>
    <property type="project" value="ProtInc"/>
</dbReference>
<dbReference type="GO" id="GO:0030001">
    <property type="term" value="P:metal ion transport"/>
    <property type="evidence" value="ECO:0000304"/>
    <property type="project" value="UniProtKB"/>
</dbReference>
<dbReference type="GO" id="GO:0160184">
    <property type="term" value="P:paracellular transport"/>
    <property type="evidence" value="ECO:0000314"/>
    <property type="project" value="UniProtKB"/>
</dbReference>
<dbReference type="GO" id="GO:0070293">
    <property type="term" value="P:renal absorption"/>
    <property type="evidence" value="ECO:0007669"/>
    <property type="project" value="Ensembl"/>
</dbReference>
<dbReference type="FunFam" id="1.20.140.150:FF:000012">
    <property type="entry name" value="Claudin"/>
    <property type="match status" value="1"/>
</dbReference>
<dbReference type="Gene3D" id="1.20.140.150">
    <property type="match status" value="1"/>
</dbReference>
<dbReference type="InterPro" id="IPR006187">
    <property type="entry name" value="Claudin"/>
</dbReference>
<dbReference type="InterPro" id="IPR003927">
    <property type="entry name" value="Claudin16"/>
</dbReference>
<dbReference type="InterPro" id="IPR017974">
    <property type="entry name" value="Claudin_CS"/>
</dbReference>
<dbReference type="InterPro" id="IPR004031">
    <property type="entry name" value="PMP22/EMP/MP20/Claudin"/>
</dbReference>
<dbReference type="PANTHER" id="PTHR12002">
    <property type="entry name" value="CLAUDIN"/>
    <property type="match status" value="1"/>
</dbReference>
<dbReference type="Pfam" id="PF00822">
    <property type="entry name" value="PMP22_Claudin"/>
    <property type="match status" value="1"/>
</dbReference>
<dbReference type="PRINTS" id="PR01077">
    <property type="entry name" value="CLAUDIN"/>
</dbReference>
<dbReference type="PRINTS" id="PR01447">
    <property type="entry name" value="CLAUDIN16"/>
</dbReference>
<dbReference type="PROSITE" id="PS01346">
    <property type="entry name" value="CLAUDIN"/>
    <property type="match status" value="1"/>
</dbReference>
<gene>
    <name evidence="15 18" type="primary">CLDN16</name>
    <name type="synonym">PCLN1</name>
</gene>